<dbReference type="EC" id="4.6.1.14"/>
<dbReference type="EMBL" id="X13292">
    <property type="protein sequence ID" value="CAA31654.1"/>
    <property type="molecule type" value="mRNA"/>
</dbReference>
<dbReference type="EMBL" id="J04124">
    <property type="protein sequence ID" value="AAA30230.1"/>
    <property type="molecule type" value="mRNA"/>
</dbReference>
<dbReference type="EMBL" id="AJ000080">
    <property type="protein sequence ID" value="CAA03907.1"/>
    <property type="molecule type" value="Genomic_DNA"/>
</dbReference>
<dbReference type="EMBL" id="AJ250726">
    <property type="protein sequence ID" value="CAB60085.1"/>
    <property type="molecule type" value="Genomic_DNA"/>
</dbReference>
<dbReference type="PIR" id="A31254">
    <property type="entry name" value="A31254"/>
</dbReference>
<dbReference type="PIR" id="S03389">
    <property type="entry name" value="S03389"/>
</dbReference>
<dbReference type="GO" id="GO:0005886">
    <property type="term" value="C:plasma membrane"/>
    <property type="evidence" value="ECO:0000314"/>
    <property type="project" value="GeneDB"/>
</dbReference>
<dbReference type="GO" id="GO:0047396">
    <property type="term" value="F:glycosylphosphatidylinositol diacylglycerol-lyase activity"/>
    <property type="evidence" value="ECO:0007669"/>
    <property type="project" value="UniProtKB-EC"/>
</dbReference>
<dbReference type="GO" id="GO:0004629">
    <property type="term" value="F:phospholipase C activity"/>
    <property type="evidence" value="ECO:0000304"/>
    <property type="project" value="GeneDB"/>
</dbReference>
<dbReference type="GO" id="GO:0006650">
    <property type="term" value="P:glycerophospholipid metabolic process"/>
    <property type="evidence" value="ECO:0000315"/>
    <property type="project" value="GeneDB"/>
</dbReference>
<dbReference type="GO" id="GO:0006629">
    <property type="term" value="P:lipid metabolic process"/>
    <property type="evidence" value="ECO:0000315"/>
    <property type="project" value="GeneDB"/>
</dbReference>
<dbReference type="CDD" id="cd08587">
    <property type="entry name" value="PI-PLCXDc_like"/>
    <property type="match status" value="1"/>
</dbReference>
<dbReference type="Gene3D" id="3.20.20.190">
    <property type="entry name" value="Phosphatidylinositol (PI) phosphodiesterase"/>
    <property type="match status" value="1"/>
</dbReference>
<dbReference type="InterPro" id="IPR051057">
    <property type="entry name" value="PI-PLC_domain"/>
</dbReference>
<dbReference type="InterPro" id="IPR017946">
    <property type="entry name" value="PLC-like_Pdiesterase_TIM-brl"/>
</dbReference>
<dbReference type="InterPro" id="IPR000909">
    <property type="entry name" value="PLipase_C_PInositol-sp_X_dom"/>
</dbReference>
<dbReference type="PANTHER" id="PTHR13593">
    <property type="match status" value="1"/>
</dbReference>
<dbReference type="PANTHER" id="PTHR13593:SF113">
    <property type="entry name" value="SI:DKEY-266F7.9"/>
    <property type="match status" value="1"/>
</dbReference>
<dbReference type="Pfam" id="PF00388">
    <property type="entry name" value="PI-PLC-X"/>
    <property type="match status" value="1"/>
</dbReference>
<dbReference type="SMART" id="SM00148">
    <property type="entry name" value="PLCXc"/>
    <property type="match status" value="1"/>
</dbReference>
<dbReference type="SUPFAM" id="SSF51695">
    <property type="entry name" value="PLC-like phosphodiesterases"/>
    <property type="match status" value="1"/>
</dbReference>
<dbReference type="PROSITE" id="PS50007">
    <property type="entry name" value="PIPLC_X_DOMAIN"/>
    <property type="match status" value="1"/>
</dbReference>
<evidence type="ECO:0000255" key="1">
    <source>
        <dbReference type="PROSITE-ProRule" id="PRU00270"/>
    </source>
</evidence>
<evidence type="ECO:0000305" key="2"/>
<reference key="1">
    <citation type="journal article" date="1989" name="Mol. Biochem. Parasitol.">
        <title>Sequence and expression of the glycosyl-phosphatidylinositol-specific phospholipase C of Trypanosoma brucei.</title>
        <authorList>
            <person name="Carrington M."/>
            <person name="Buelow R."/>
            <person name="Reinke H."/>
            <person name="Overath P."/>
        </authorList>
    </citation>
    <scope>NUCLEOTIDE SEQUENCE [MRNA]</scope>
</reference>
<reference key="2">
    <citation type="journal article" date="1988" name="Proc. Natl. Acad. Sci. U.S.A.">
        <title>cDNA encoding the glycosyl-phosphatidylinositol-specific phospholipase C of Trypanosoma brucei.</title>
        <authorList>
            <person name="Hereld D."/>
            <person name="Hart G.W."/>
            <person name="Englund P.T."/>
        </authorList>
    </citation>
    <scope>NUCLEOTIDE SEQUENCE [MRNA]</scope>
    <scope>PARTIAL PROTEIN SEQUENCE</scope>
    <source>
        <strain>ILTAT 1.3</strain>
    </source>
</reference>
<reference key="3">
    <citation type="journal article" date="1998" name="Mol. Biochem. Parasitol.">
        <title>Conservation of genetic linkage between heat shock protein 100 and glycosylphosphatidylinositol-specific phospholipase C in Trypanosoma brucei and Trypanosoma cruzi.</title>
        <authorList>
            <person name="Redpath M.B."/>
            <person name="Carnall N."/>
            <person name="Webb H."/>
            <person name="Courel M."/>
            <person name="Amorim A."/>
            <person name="Guther M.L.S."/>
            <person name="Cardoso de Almeida M.L."/>
            <person name="Carrington M."/>
        </authorList>
    </citation>
    <scope>NUCLEOTIDE SEQUENCE [GENOMIC DNA]</scope>
    <source>
        <strain>STIB 367H / ILTAR1</strain>
    </source>
</reference>
<reference key="4">
    <citation type="journal article" date="2001" name="Mol. Biochem. Parasitol.">
        <title>The coatomer of Trypanosoma brucei.</title>
        <authorList>
            <person name="Maier A.G."/>
            <person name="Webb H."/>
            <person name="Ding M."/>
            <person name="Bremser M."/>
            <person name="Carrington M."/>
            <person name="Clayton C."/>
        </authorList>
    </citation>
    <scope>NUCLEOTIDE SEQUENCE [GENOMIC DNA]</scope>
</reference>
<sequence length="358" mass="40663">MFGGVKWSPQSWMSDTRSSIEKKCIGQVYMVGAHNAGTHGIQMFSPFGLDAPEKLRSLPPYVTFLLRFLTVGVSSRWGRCQNLSIRQLLDHGVRYLDLRMNISPDQENKIYTTHFHISVPLQEVLKDVKDFLTTPASANEFVILDFLHFYGFNESHTMKRFVEELQALEEFYIPTTVSLTTPLCNLWQSTRRIFLVVRPYVEYPYARLRSVALKSIWVNQMELNDLLDRLEELMTRDLEDVSIGGVPSKMYVTQAIGTPRNNDFAVAACCGACPGSHPDLYSAAKHKNPHLLKWFYDLNVNGVMRGERVTIRRGNNTHGNILLLDFVQEGTCTVKGVDKPMNAVALCVHLNTNQTARS</sequence>
<proteinExistence type="evidence at protein level"/>
<feature type="chain" id="PRO_0000088483" description="Variant-surface-glycoprotein phospholipase C">
    <location>
        <begin position="1"/>
        <end position="358"/>
    </location>
</feature>
<feature type="domain" description="PI-PLC X-box" evidence="1">
    <location>
        <begin position="25"/>
        <end position="198"/>
    </location>
</feature>
<feature type="sequence conflict" description="In Ref. 2; AAA30230." evidence="2" ref="2">
    <original>I</original>
    <variation>V</variation>
    <location>
        <position position="102"/>
    </location>
</feature>
<feature type="sequence conflict" description="In Ref. 2; AAA30230." evidence="2" ref="2">
    <original>S</original>
    <variation>R</variation>
    <location>
        <position position="155"/>
    </location>
</feature>
<feature type="sequence conflict" description="In Ref. 2; AAA30230." evidence="2" ref="2">
    <original>T</original>
    <variation>N</variation>
    <location>
        <position position="190"/>
    </location>
</feature>
<feature type="sequence conflict" description="In Ref. 2; AAA30230." evidence="2" ref="2">
    <original>G</original>
    <variation>S</variation>
    <location>
        <position position="271"/>
    </location>
</feature>
<feature type="sequence conflict" description="In Ref. 2; AAA30230." evidence="2" ref="2">
    <original>K</original>
    <variation>Q</variation>
    <location>
        <position position="293"/>
    </location>
</feature>
<name>PHLC_TRYBB</name>
<organism>
    <name type="scientific">Trypanosoma brucei brucei</name>
    <dbReference type="NCBI Taxonomy" id="5702"/>
    <lineage>
        <taxon>Eukaryota</taxon>
        <taxon>Discoba</taxon>
        <taxon>Euglenozoa</taxon>
        <taxon>Kinetoplastea</taxon>
        <taxon>Metakinetoplastina</taxon>
        <taxon>Trypanosomatida</taxon>
        <taxon>Trypanosomatidae</taxon>
        <taxon>Trypanosoma</taxon>
    </lineage>
</organism>
<comment type="function">
    <text>By hydrolysis of the attached glycolipid, releases soluble variant surface glycoprotein containing phosphoinositol from the cell wall of T.brucei after cell lysis. It also cleaves similar membrane anchors on some mammalian proteins. VSG lipase may play a role in processes such as parasite differentiation or antigenic variation.</text>
</comment>
<comment type="catalytic activity">
    <reaction>
        <text>a 6-(alpha-D-glucosaminyl)-1-(1,2-diacyl-sn-glycero-3-phospho)-1D-myo-inositol = 6-(alpha-D-glucosaminyl)-1D-myo-inositol 1,2-cyclic phosphate + a 1,2-diacyl-sn-glycerol</text>
        <dbReference type="Rhea" id="RHEA:14333"/>
        <dbReference type="ChEBI" id="CHEBI:17815"/>
        <dbReference type="ChEBI" id="CHEBI:57997"/>
        <dbReference type="ChEBI" id="CHEBI:58891"/>
        <dbReference type="EC" id="4.6.1.14"/>
    </reaction>
</comment>
<comment type="subunit">
    <text>Monomer.</text>
</comment>
<comment type="subcellular location">
    <subcellularLocation>
        <location>Membrane</location>
        <topology>Peripheral membrane protein</topology>
    </subcellularLocation>
</comment>
<comment type="PTM">
    <text>The N-terminus is blocked.</text>
</comment>
<protein>
    <recommendedName>
        <fullName>Variant-surface-glycoprotein phospholipase C</fullName>
        <shortName>VSG lipase</shortName>
        <ecNumber>4.6.1.14</ecNumber>
    </recommendedName>
    <alternativeName>
        <fullName>Glycosylphosphatidylinositol-specific phospholipase C</fullName>
        <shortName>GPI-PLC</shortName>
    </alternativeName>
</protein>
<keyword id="KW-0903">Direct protein sequencing</keyword>
<keyword id="KW-0456">Lyase</keyword>
<keyword id="KW-0472">Membrane</keyword>
<accession>P09194</accession>
<accession>Q7KA50</accession>